<organism>
    <name type="scientific">Mus musculus</name>
    <name type="common">Mouse</name>
    <dbReference type="NCBI Taxonomy" id="10090"/>
    <lineage>
        <taxon>Eukaryota</taxon>
        <taxon>Metazoa</taxon>
        <taxon>Chordata</taxon>
        <taxon>Craniata</taxon>
        <taxon>Vertebrata</taxon>
        <taxon>Euteleostomi</taxon>
        <taxon>Mammalia</taxon>
        <taxon>Eutheria</taxon>
        <taxon>Euarchontoglires</taxon>
        <taxon>Glires</taxon>
        <taxon>Rodentia</taxon>
        <taxon>Myomorpha</taxon>
        <taxon>Muroidea</taxon>
        <taxon>Muridae</taxon>
        <taxon>Murinae</taxon>
        <taxon>Mus</taxon>
        <taxon>Mus</taxon>
    </lineage>
</organism>
<name>DKK1_MOUSE</name>
<evidence type="ECO:0000250" key="1"/>
<evidence type="ECO:0000250" key="2">
    <source>
        <dbReference type="UniProtKB" id="O94907"/>
    </source>
</evidence>
<evidence type="ECO:0000255" key="3"/>
<evidence type="ECO:0000269" key="4">
    <source>
    </source>
</evidence>
<evidence type="ECO:0000269" key="5">
    <source>
    </source>
</evidence>
<evidence type="ECO:0000269" key="6">
    <source>
    </source>
</evidence>
<evidence type="ECO:0000269" key="7">
    <source>
    </source>
</evidence>
<evidence type="ECO:0000305" key="8"/>
<dbReference type="EMBL" id="AF030433">
    <property type="protein sequence ID" value="AAC02426.1"/>
    <property type="molecule type" value="mRNA"/>
</dbReference>
<dbReference type="EMBL" id="JN966751">
    <property type="protein sequence ID" value="AFI61654.1"/>
    <property type="molecule type" value="mRNA"/>
</dbReference>
<dbReference type="EMBL" id="AK141693">
    <property type="protein sequence ID" value="BAE24802.1"/>
    <property type="molecule type" value="mRNA"/>
</dbReference>
<dbReference type="EMBL" id="AK144119">
    <property type="protein sequence ID" value="BAE25711.1"/>
    <property type="molecule type" value="mRNA"/>
</dbReference>
<dbReference type="EMBL" id="AC103405">
    <property type="status" value="NOT_ANNOTATED_CDS"/>
    <property type="molecule type" value="Genomic_DNA"/>
</dbReference>
<dbReference type="EMBL" id="CH466534">
    <property type="protein sequence ID" value="EDL41707.1"/>
    <property type="molecule type" value="Genomic_DNA"/>
</dbReference>
<dbReference type="EMBL" id="BC050189">
    <property type="protein sequence ID" value="AAH50189.1"/>
    <property type="molecule type" value="mRNA"/>
</dbReference>
<dbReference type="CCDS" id="CCDS29744.1"/>
<dbReference type="RefSeq" id="NP_034181.2">
    <property type="nucleotide sequence ID" value="NM_010051.3"/>
</dbReference>
<dbReference type="SMR" id="O54908"/>
<dbReference type="BioGRID" id="199226">
    <property type="interactions" value="9"/>
</dbReference>
<dbReference type="CORUM" id="O54908"/>
<dbReference type="FunCoup" id="O54908">
    <property type="interactions" value="393"/>
</dbReference>
<dbReference type="STRING" id="10090.ENSMUSP00000025803"/>
<dbReference type="BindingDB" id="O54908"/>
<dbReference type="ChEMBL" id="CHEMBL3745589"/>
<dbReference type="GlyCosmos" id="O54908">
    <property type="glycosylation" value="2 sites, No reported glycans"/>
</dbReference>
<dbReference type="GlyGen" id="O54908">
    <property type="glycosylation" value="2 sites"/>
</dbReference>
<dbReference type="PhosphoSitePlus" id="O54908"/>
<dbReference type="jPOST" id="O54908"/>
<dbReference type="PaxDb" id="10090-ENSMUSP00000025803"/>
<dbReference type="ProteomicsDB" id="279674"/>
<dbReference type="ABCD" id="O54908">
    <property type="antibodies" value="15 sequenced antibodies"/>
</dbReference>
<dbReference type="Antibodypedia" id="4049">
    <property type="antibodies" value="1019 antibodies from 48 providers"/>
</dbReference>
<dbReference type="DNASU" id="13380"/>
<dbReference type="Ensembl" id="ENSMUST00000025803.9">
    <property type="protein sequence ID" value="ENSMUSP00000025803.9"/>
    <property type="gene ID" value="ENSMUSG00000024868.9"/>
</dbReference>
<dbReference type="GeneID" id="13380"/>
<dbReference type="KEGG" id="mmu:13380"/>
<dbReference type="UCSC" id="uc008hen.2">
    <property type="organism name" value="mouse"/>
</dbReference>
<dbReference type="AGR" id="MGI:1329040"/>
<dbReference type="CTD" id="22943"/>
<dbReference type="MGI" id="MGI:1329040">
    <property type="gene designation" value="Dkk1"/>
</dbReference>
<dbReference type="VEuPathDB" id="HostDB:ENSMUSG00000024868"/>
<dbReference type="eggNOG" id="KOG1218">
    <property type="taxonomic scope" value="Eukaryota"/>
</dbReference>
<dbReference type="GeneTree" id="ENSGT00940000161319"/>
<dbReference type="HOGENOM" id="CLU_080459_0_0_1"/>
<dbReference type="InParanoid" id="O54908"/>
<dbReference type="OMA" id="LDNYQPY"/>
<dbReference type="OrthoDB" id="4321958at2759"/>
<dbReference type="PhylomeDB" id="O54908"/>
<dbReference type="TreeFam" id="TF330916"/>
<dbReference type="Reactome" id="R-MMU-3772470">
    <property type="pathway name" value="Negative regulation of TCF-dependent signaling by WNT ligand antagonists"/>
</dbReference>
<dbReference type="BioGRID-ORCS" id="13380">
    <property type="hits" value="6 hits in 80 CRISPR screens"/>
</dbReference>
<dbReference type="PRO" id="PR:O54908"/>
<dbReference type="Proteomes" id="UP000000589">
    <property type="component" value="Chromosome 19"/>
</dbReference>
<dbReference type="RNAct" id="O54908">
    <property type="molecule type" value="protein"/>
</dbReference>
<dbReference type="Bgee" id="ENSMUSG00000024868">
    <property type="expression patterns" value="Expressed in dermal bone and 217 other cell types or tissues"/>
</dbReference>
<dbReference type="GO" id="GO:0005576">
    <property type="term" value="C:extracellular region"/>
    <property type="evidence" value="ECO:0000250"/>
    <property type="project" value="MGI"/>
</dbReference>
<dbReference type="GO" id="GO:0005615">
    <property type="term" value="C:extracellular space"/>
    <property type="evidence" value="ECO:0007669"/>
    <property type="project" value="Ensembl"/>
</dbReference>
<dbReference type="GO" id="GO:0005886">
    <property type="term" value="C:plasma membrane"/>
    <property type="evidence" value="ECO:0000266"/>
    <property type="project" value="MGI"/>
</dbReference>
<dbReference type="GO" id="GO:0039706">
    <property type="term" value="F:co-receptor binding"/>
    <property type="evidence" value="ECO:0007669"/>
    <property type="project" value="Ensembl"/>
</dbReference>
<dbReference type="GO" id="GO:0050750">
    <property type="term" value="F:low-density lipoprotein particle receptor binding"/>
    <property type="evidence" value="ECO:0000266"/>
    <property type="project" value="MGI"/>
</dbReference>
<dbReference type="GO" id="GO:0048019">
    <property type="term" value="F:receptor antagonist activity"/>
    <property type="evidence" value="ECO:0007669"/>
    <property type="project" value="Ensembl"/>
</dbReference>
<dbReference type="GO" id="GO:0060070">
    <property type="term" value="P:canonical Wnt signaling pathway"/>
    <property type="evidence" value="ECO:0000315"/>
    <property type="project" value="MGI"/>
</dbReference>
<dbReference type="GO" id="GO:0000902">
    <property type="term" value="P:cell morphogenesis"/>
    <property type="evidence" value="ECO:0000315"/>
    <property type="project" value="MGI"/>
</dbReference>
<dbReference type="GO" id="GO:0030326">
    <property type="term" value="P:embryonic limb morphogenesis"/>
    <property type="evidence" value="ECO:0000316"/>
    <property type="project" value="MGI"/>
</dbReference>
<dbReference type="GO" id="GO:0007492">
    <property type="term" value="P:endoderm development"/>
    <property type="evidence" value="ECO:0000315"/>
    <property type="project" value="MGI"/>
</dbReference>
<dbReference type="GO" id="GO:0001706">
    <property type="term" value="P:endoderm formation"/>
    <property type="evidence" value="ECO:0000314"/>
    <property type="project" value="MGI"/>
</dbReference>
<dbReference type="GO" id="GO:0060325">
    <property type="term" value="P:face morphogenesis"/>
    <property type="evidence" value="ECO:0000315"/>
    <property type="project" value="MGI"/>
</dbReference>
<dbReference type="GO" id="GO:0030900">
    <property type="term" value="P:forebrain development"/>
    <property type="evidence" value="ECO:0000316"/>
    <property type="project" value="MGI"/>
</dbReference>
<dbReference type="GO" id="GO:0001942">
    <property type="term" value="P:hair follicle development"/>
    <property type="evidence" value="ECO:0000314"/>
    <property type="project" value="MGI"/>
</dbReference>
<dbReference type="GO" id="GO:0060323">
    <property type="term" value="P:head morphogenesis"/>
    <property type="evidence" value="ECO:0000316"/>
    <property type="project" value="MGI"/>
</dbReference>
<dbReference type="GO" id="GO:0003129">
    <property type="term" value="P:heart induction"/>
    <property type="evidence" value="ECO:0000314"/>
    <property type="project" value="BHF-UCL"/>
</dbReference>
<dbReference type="GO" id="GO:0007611">
    <property type="term" value="P:learning or memory"/>
    <property type="evidence" value="ECO:0000314"/>
    <property type="project" value="ARUK-UCL"/>
</dbReference>
<dbReference type="GO" id="GO:0060173">
    <property type="term" value="P:limb development"/>
    <property type="evidence" value="ECO:0000315"/>
    <property type="project" value="UniProtKB"/>
</dbReference>
<dbReference type="GO" id="GO:0001707">
    <property type="term" value="P:mesoderm formation"/>
    <property type="evidence" value="ECO:0000314"/>
    <property type="project" value="MGI"/>
</dbReference>
<dbReference type="GO" id="GO:0061743">
    <property type="term" value="P:motor learning"/>
    <property type="evidence" value="ECO:0000314"/>
    <property type="project" value="ParkinsonsUK-UCL"/>
</dbReference>
<dbReference type="GO" id="GO:0043066">
    <property type="term" value="P:negative regulation of apoptotic process"/>
    <property type="evidence" value="ECO:0000314"/>
    <property type="project" value="UniProtKB"/>
</dbReference>
<dbReference type="GO" id="GO:0030514">
    <property type="term" value="P:negative regulation of BMP signaling pathway"/>
    <property type="evidence" value="ECO:0000314"/>
    <property type="project" value="MGI"/>
</dbReference>
<dbReference type="GO" id="GO:0090090">
    <property type="term" value="P:negative regulation of canonical Wnt signaling pathway"/>
    <property type="evidence" value="ECO:0000314"/>
    <property type="project" value="ParkinsonsUK-UCL"/>
</dbReference>
<dbReference type="GO" id="GO:2000726">
    <property type="term" value="P:negative regulation of cardiac muscle cell differentiation"/>
    <property type="evidence" value="ECO:0007669"/>
    <property type="project" value="Ensembl"/>
</dbReference>
<dbReference type="GO" id="GO:0042662">
    <property type="term" value="P:negative regulation of mesodermal cell fate specification"/>
    <property type="evidence" value="ECO:0007669"/>
    <property type="project" value="Ensembl"/>
</dbReference>
<dbReference type="GO" id="GO:0010977">
    <property type="term" value="P:negative regulation of neuron projection development"/>
    <property type="evidence" value="ECO:0000314"/>
    <property type="project" value="ARUK-UCL"/>
</dbReference>
<dbReference type="GO" id="GO:0030279">
    <property type="term" value="P:negative regulation of ossification"/>
    <property type="evidence" value="ECO:0000315"/>
    <property type="project" value="UniProtKB"/>
</dbReference>
<dbReference type="GO" id="GO:1905607">
    <property type="term" value="P:negative regulation of presynapse assembly"/>
    <property type="evidence" value="ECO:0000314"/>
    <property type="project" value="ARUK-UCL"/>
</dbReference>
<dbReference type="GO" id="GO:0060392">
    <property type="term" value="P:negative regulation of SMAD protein signal transduction"/>
    <property type="evidence" value="ECO:0007669"/>
    <property type="project" value="Ensembl"/>
</dbReference>
<dbReference type="GO" id="GO:0000122">
    <property type="term" value="P:negative regulation of transcription by RNA polymerase II"/>
    <property type="evidence" value="ECO:0000314"/>
    <property type="project" value="BHF-UCL"/>
</dbReference>
<dbReference type="GO" id="GO:0030178">
    <property type="term" value="P:negative regulation of Wnt signaling pathway"/>
    <property type="evidence" value="ECO:0000314"/>
    <property type="project" value="MGI"/>
</dbReference>
<dbReference type="GO" id="GO:1904723">
    <property type="term" value="P:negative regulation of Wnt-Frizzled-LRP5/6 complex assembly"/>
    <property type="evidence" value="ECO:0000304"/>
    <property type="project" value="ParkinsonsUK-UCL"/>
</dbReference>
<dbReference type="GO" id="GO:0010628">
    <property type="term" value="P:positive regulation of gene expression"/>
    <property type="evidence" value="ECO:0000314"/>
    <property type="project" value="ARUK-UCL"/>
</dbReference>
<dbReference type="GO" id="GO:0046330">
    <property type="term" value="P:positive regulation of JNK cascade"/>
    <property type="evidence" value="ECO:0007669"/>
    <property type="project" value="Ensembl"/>
</dbReference>
<dbReference type="GO" id="GO:1904958">
    <property type="term" value="P:positive regulation of midbrain dopaminergic neuron differentiation"/>
    <property type="evidence" value="ECO:0000315"/>
    <property type="project" value="ParkinsonsUK-UCL"/>
</dbReference>
<dbReference type="GO" id="GO:0042663">
    <property type="term" value="P:regulation of endodermal cell fate specification"/>
    <property type="evidence" value="ECO:0007669"/>
    <property type="project" value="Ensembl"/>
</dbReference>
<dbReference type="GO" id="GO:0043523">
    <property type="term" value="P:regulation of neuron apoptotic process"/>
    <property type="evidence" value="ECO:0007669"/>
    <property type="project" value="Ensembl"/>
</dbReference>
<dbReference type="GO" id="GO:0002090">
    <property type="term" value="P:regulation of receptor internalization"/>
    <property type="evidence" value="ECO:0007669"/>
    <property type="project" value="Ensembl"/>
</dbReference>
<dbReference type="GO" id="GO:0050807">
    <property type="term" value="P:regulation of synapse organization"/>
    <property type="evidence" value="ECO:0000314"/>
    <property type="project" value="ParkinsonsUK-UCL"/>
</dbReference>
<dbReference type="GO" id="GO:0051966">
    <property type="term" value="P:regulation of synaptic transmission, glutamatergic"/>
    <property type="evidence" value="ECO:0000314"/>
    <property type="project" value="ParkinsonsUK-UCL"/>
</dbReference>
<dbReference type="GO" id="GO:0030111">
    <property type="term" value="P:regulation of Wnt signaling pathway"/>
    <property type="evidence" value="ECO:0000315"/>
    <property type="project" value="MGI"/>
</dbReference>
<dbReference type="GO" id="GO:0032526">
    <property type="term" value="P:response to retinoic acid"/>
    <property type="evidence" value="ECO:0000314"/>
    <property type="project" value="MGI"/>
</dbReference>
<dbReference type="GO" id="GO:0016055">
    <property type="term" value="P:Wnt signaling pathway"/>
    <property type="evidence" value="ECO:0000314"/>
    <property type="project" value="MGI"/>
</dbReference>
<dbReference type="GO" id="GO:0090244">
    <property type="term" value="P:Wnt signaling pathway involved in somitogenesis"/>
    <property type="evidence" value="ECO:0000316"/>
    <property type="project" value="MGI"/>
</dbReference>
<dbReference type="CDD" id="cd23272">
    <property type="entry name" value="Dkk1_Cys2"/>
    <property type="match status" value="1"/>
</dbReference>
<dbReference type="CDD" id="cd23026">
    <property type="entry name" value="Dkk1_N_Cys1"/>
    <property type="match status" value="1"/>
</dbReference>
<dbReference type="FunFam" id="2.10.80.10:FF:000001">
    <property type="entry name" value="Dickkopf WNT-signaling pathway inhibitor 2"/>
    <property type="match status" value="1"/>
</dbReference>
<dbReference type="Gene3D" id="2.10.80.10">
    <property type="entry name" value="Lipase, subunit A"/>
    <property type="match status" value="1"/>
</dbReference>
<dbReference type="InterPro" id="IPR006796">
    <property type="entry name" value="Dickkopf_N"/>
</dbReference>
<dbReference type="InterPro" id="IPR048500">
    <property type="entry name" value="DIKK1/2/4_C-subdom1"/>
</dbReference>
<dbReference type="InterPro" id="IPR048499">
    <property type="entry name" value="DIKK1/2/4_C-subdom2"/>
</dbReference>
<dbReference type="InterPro" id="IPR039863">
    <property type="entry name" value="DKK1-4"/>
</dbReference>
<dbReference type="InterPro" id="IPR047304">
    <property type="entry name" value="Dkk1_Cys2"/>
</dbReference>
<dbReference type="InterPro" id="IPR047305">
    <property type="entry name" value="Dkk1_N"/>
</dbReference>
<dbReference type="PANTHER" id="PTHR12113:SF11">
    <property type="entry name" value="DICKKOPF-RELATED PROTEIN 1"/>
    <property type="match status" value="1"/>
</dbReference>
<dbReference type="PANTHER" id="PTHR12113">
    <property type="entry name" value="DICKKOPF3-LIKE 3"/>
    <property type="match status" value="1"/>
</dbReference>
<dbReference type="Pfam" id="PF04706">
    <property type="entry name" value="Dickkopf_N"/>
    <property type="match status" value="1"/>
</dbReference>
<dbReference type="Pfam" id="PF21481">
    <property type="entry name" value="DIKK1-2-4_C-subdom1"/>
    <property type="match status" value="1"/>
</dbReference>
<dbReference type="Pfam" id="PF21479">
    <property type="entry name" value="DIKK1-2-4_C-subdom2"/>
    <property type="match status" value="1"/>
</dbReference>
<accession>O54908</accession>
<accession>Q80UL5</accession>
<proteinExistence type="evidence at protein level"/>
<feature type="signal peptide" evidence="3">
    <location>
        <begin position="1"/>
        <end position="31"/>
    </location>
</feature>
<feature type="chain" id="PRO_0000007219" description="Dickkopf-related protein 1">
    <location>
        <begin position="32"/>
        <end position="272"/>
    </location>
</feature>
<feature type="region of interest" description="DKK-type Cys-1">
    <location>
        <begin position="86"/>
        <end position="141"/>
    </location>
</feature>
<feature type="region of interest" description="DKK-type Cys-2">
    <location>
        <begin position="195"/>
        <end position="269"/>
    </location>
</feature>
<feature type="glycosylation site" description="O-linked (GalNAc...) serine" evidence="1">
    <location>
        <position position="62"/>
    </location>
</feature>
<feature type="glycosylation site" description="N-linked (GlcNAc...) asparagine" evidence="3">
    <location>
        <position position="262"/>
    </location>
</feature>
<feature type="disulfide bond" evidence="1">
    <location>
        <begin position="86"/>
        <end position="98"/>
    </location>
</feature>
<feature type="disulfide bond" evidence="1">
    <location>
        <begin position="92"/>
        <end position="114"/>
    </location>
</feature>
<feature type="disulfide bond" evidence="1">
    <location>
        <begin position="117"/>
        <end position="131"/>
    </location>
</feature>
<feature type="disulfide bond" evidence="1">
    <location>
        <begin position="124"/>
        <end position="136"/>
    </location>
</feature>
<feature type="disulfide bond" evidence="1">
    <location>
        <begin position="130"/>
        <end position="141"/>
    </location>
</feature>
<feature type="disulfide bond" evidence="1">
    <location>
        <begin position="195"/>
        <end position="207"/>
    </location>
</feature>
<feature type="disulfide bond" evidence="1">
    <location>
        <begin position="201"/>
        <end position="216"/>
    </location>
</feature>
<feature type="disulfide bond" evidence="1">
    <location>
        <begin position="206"/>
        <end position="243"/>
    </location>
</feature>
<feature type="disulfide bond" evidence="1">
    <location>
        <begin position="226"/>
        <end position="251"/>
    </location>
</feature>
<feature type="disulfide bond" evidence="1">
    <location>
        <begin position="245"/>
        <end position="269"/>
    </location>
</feature>
<feature type="mutagenesis site" description="50% reduced binding to LRP6." evidence="5">
    <original>H</original>
    <variation>E</variation>
    <location>
        <position position="210"/>
    </location>
</feature>
<feature type="mutagenesis site" description="50% reduced binding to LRP6." evidence="5">
    <original>K</original>
    <variation>E</variation>
    <location>
        <position position="217"/>
    </location>
</feature>
<feature type="mutagenesis site" description="50% reduced binding to LRP6." evidence="5">
    <original>R</original>
    <variation>E</variation>
    <location>
        <position position="242"/>
    </location>
</feature>
<feature type="mutagenesis site" description="43% reduced binding to LRP6." evidence="5">
    <original>H</original>
    <variation>E</variation>
    <location>
        <position position="267"/>
    </location>
</feature>
<feature type="sequence conflict" description="In Ref. 1; AAC02426." evidence="8" ref="1">
    <original>A</original>
    <variation>P</variation>
    <location>
        <position position="7"/>
    </location>
</feature>
<feature type="sequence conflict" description="In Ref. 1; AAC02426." evidence="8" ref="1">
    <original>R</original>
    <variation>T</variation>
    <location>
        <position position="126"/>
    </location>
</feature>
<sequence>MMVVCAAAAVRFLAVFTMMALCSLPLLGASATLNSVLINSNAIKNLPPPLGGAGGQPGSAVSVAPGVLYEGGNKYQTLDNYQPYPCAEDEECGSDEYCSSPSRGAAGVGGVQICLACRKRRKRCMRHAMCCPGNYCKNGICMPSDHSHFPRGEIEESIIENLGNDHNAAAGDGYPRRTTLTSKIYHTKGQEGSVCLRSSDCAAGLCCARHFWSKICKPVLKEGQVCTKHKRKGSHGLEIFQRCYCGEGLACRIQKDHHQASNSSRLHTCQRH</sequence>
<comment type="function">
    <text evidence="4 5 6">Antagonizes canonical Wnt signaling by inhibiting LRP5/6 interaction with Wnt and by forming a ternary complex with the transmembrane protein KREMEN that promotes internalization of LRP5/6 (PubMed:18524778). Inhibits the pro-apoptotic function of KREMEN1 in a Wnt-independent manner, and has anti-apoptotic activity (PubMed:26206087). Plays a role in limb development; attenuates Wnt signaling in the developing limb to allow normal limb patterning (PubMed:18505822).</text>
</comment>
<comment type="subunit">
    <text evidence="2 5">Interacts (via the C-terminal Cys-rich domain) with LRP5 (via beta-propeller regions 3 and 4); the interaction, enhanced by MESD and or KREMEN, antagonizes Wnt-mediated signaling. Interacts with LRP6 (PubMed:18524778). Forms a ternary complex with LRP6 and KREM1. Interacts with KREM1 (By similarity).</text>
</comment>
<comment type="subcellular location">
    <subcellularLocation>
        <location>Secreted</location>
    </subcellularLocation>
</comment>
<comment type="developmental stage">
    <text evidence="6 7">Expressed in the developing brain, cochlea and limb buds.</text>
</comment>
<comment type="domain">
    <text>The C-terminal cysteine-rich domain mediates interaction with LRP5 and LRP6.</text>
</comment>
<comment type="disruption phenotype">
    <text evidence="4">Triple knockout mice KREM1/KREM2/DKK1 exhibit enhanced growth of ectopic digits.</text>
</comment>
<comment type="similarity">
    <text evidence="8">Belongs to the dickkopf family.</text>
</comment>
<protein>
    <recommendedName>
        <fullName>Dickkopf-related protein 1</fullName>
        <shortName>Dickkopf-1</shortName>
        <shortName>Dkk-1</shortName>
        <shortName>mDkk-1</shortName>
    </recommendedName>
</protein>
<gene>
    <name type="primary">Dkk1</name>
</gene>
<keyword id="KW-0217">Developmental protein</keyword>
<keyword id="KW-1015">Disulfide bond</keyword>
<keyword id="KW-0325">Glycoprotein</keyword>
<keyword id="KW-1185">Reference proteome</keyword>
<keyword id="KW-0964">Secreted</keyword>
<keyword id="KW-0732">Signal</keyword>
<keyword id="KW-0879">Wnt signaling pathway</keyword>
<reference key="1">
    <citation type="journal article" date="1998" name="Nature">
        <title>Dickkopf-1 is a member of a new family of secreted proteins and functions in head induction.</title>
        <authorList>
            <person name="Glinka A."/>
            <person name="Wu W."/>
            <person name="Delius H."/>
            <person name="Monaghan A.P."/>
            <person name="Blumenstock C."/>
            <person name="Niehrs C."/>
        </authorList>
    </citation>
    <scope>NUCLEOTIDE SEQUENCE [MRNA]</scope>
</reference>
<reference key="2">
    <citation type="submission" date="2011-10" db="EMBL/GenBank/DDBJ databases">
        <title>Molecular cloning and bioinformatic analysis of DKK1.</title>
        <authorList>
            <person name="Hu L."/>
            <person name="Jiang G."/>
            <person name="Yang J."/>
            <person name="Liu S."/>
        </authorList>
    </citation>
    <scope>NUCLEOTIDE SEQUENCE [MRNA]</scope>
</reference>
<reference key="3">
    <citation type="journal article" date="2005" name="Science">
        <title>The transcriptional landscape of the mammalian genome.</title>
        <authorList>
            <person name="Carninci P."/>
            <person name="Kasukawa T."/>
            <person name="Katayama S."/>
            <person name="Gough J."/>
            <person name="Frith M.C."/>
            <person name="Maeda N."/>
            <person name="Oyama R."/>
            <person name="Ravasi T."/>
            <person name="Lenhard B."/>
            <person name="Wells C."/>
            <person name="Kodzius R."/>
            <person name="Shimokawa K."/>
            <person name="Bajic V.B."/>
            <person name="Brenner S.E."/>
            <person name="Batalov S."/>
            <person name="Forrest A.R."/>
            <person name="Zavolan M."/>
            <person name="Davis M.J."/>
            <person name="Wilming L.G."/>
            <person name="Aidinis V."/>
            <person name="Allen J.E."/>
            <person name="Ambesi-Impiombato A."/>
            <person name="Apweiler R."/>
            <person name="Aturaliya R.N."/>
            <person name="Bailey T.L."/>
            <person name="Bansal M."/>
            <person name="Baxter L."/>
            <person name="Beisel K.W."/>
            <person name="Bersano T."/>
            <person name="Bono H."/>
            <person name="Chalk A.M."/>
            <person name="Chiu K.P."/>
            <person name="Choudhary V."/>
            <person name="Christoffels A."/>
            <person name="Clutterbuck D.R."/>
            <person name="Crowe M.L."/>
            <person name="Dalla E."/>
            <person name="Dalrymple B.P."/>
            <person name="de Bono B."/>
            <person name="Della Gatta G."/>
            <person name="di Bernardo D."/>
            <person name="Down T."/>
            <person name="Engstrom P."/>
            <person name="Fagiolini M."/>
            <person name="Faulkner G."/>
            <person name="Fletcher C.F."/>
            <person name="Fukushima T."/>
            <person name="Furuno M."/>
            <person name="Futaki S."/>
            <person name="Gariboldi M."/>
            <person name="Georgii-Hemming P."/>
            <person name="Gingeras T.R."/>
            <person name="Gojobori T."/>
            <person name="Green R.E."/>
            <person name="Gustincich S."/>
            <person name="Harbers M."/>
            <person name="Hayashi Y."/>
            <person name="Hensch T.K."/>
            <person name="Hirokawa N."/>
            <person name="Hill D."/>
            <person name="Huminiecki L."/>
            <person name="Iacono M."/>
            <person name="Ikeo K."/>
            <person name="Iwama A."/>
            <person name="Ishikawa T."/>
            <person name="Jakt M."/>
            <person name="Kanapin A."/>
            <person name="Katoh M."/>
            <person name="Kawasawa Y."/>
            <person name="Kelso J."/>
            <person name="Kitamura H."/>
            <person name="Kitano H."/>
            <person name="Kollias G."/>
            <person name="Krishnan S.P."/>
            <person name="Kruger A."/>
            <person name="Kummerfeld S.K."/>
            <person name="Kurochkin I.V."/>
            <person name="Lareau L.F."/>
            <person name="Lazarevic D."/>
            <person name="Lipovich L."/>
            <person name="Liu J."/>
            <person name="Liuni S."/>
            <person name="McWilliam S."/>
            <person name="Madan Babu M."/>
            <person name="Madera M."/>
            <person name="Marchionni L."/>
            <person name="Matsuda H."/>
            <person name="Matsuzawa S."/>
            <person name="Miki H."/>
            <person name="Mignone F."/>
            <person name="Miyake S."/>
            <person name="Morris K."/>
            <person name="Mottagui-Tabar S."/>
            <person name="Mulder N."/>
            <person name="Nakano N."/>
            <person name="Nakauchi H."/>
            <person name="Ng P."/>
            <person name="Nilsson R."/>
            <person name="Nishiguchi S."/>
            <person name="Nishikawa S."/>
            <person name="Nori F."/>
            <person name="Ohara O."/>
            <person name="Okazaki Y."/>
            <person name="Orlando V."/>
            <person name="Pang K.C."/>
            <person name="Pavan W.J."/>
            <person name="Pavesi G."/>
            <person name="Pesole G."/>
            <person name="Petrovsky N."/>
            <person name="Piazza S."/>
            <person name="Reed J."/>
            <person name="Reid J.F."/>
            <person name="Ring B.Z."/>
            <person name="Ringwald M."/>
            <person name="Rost B."/>
            <person name="Ruan Y."/>
            <person name="Salzberg S.L."/>
            <person name="Sandelin A."/>
            <person name="Schneider C."/>
            <person name="Schoenbach C."/>
            <person name="Sekiguchi K."/>
            <person name="Semple C.A."/>
            <person name="Seno S."/>
            <person name="Sessa L."/>
            <person name="Sheng Y."/>
            <person name="Shibata Y."/>
            <person name="Shimada H."/>
            <person name="Shimada K."/>
            <person name="Silva D."/>
            <person name="Sinclair B."/>
            <person name="Sperling S."/>
            <person name="Stupka E."/>
            <person name="Sugiura K."/>
            <person name="Sultana R."/>
            <person name="Takenaka Y."/>
            <person name="Taki K."/>
            <person name="Tammoja K."/>
            <person name="Tan S.L."/>
            <person name="Tang S."/>
            <person name="Taylor M.S."/>
            <person name="Tegner J."/>
            <person name="Teichmann S.A."/>
            <person name="Ueda H.R."/>
            <person name="van Nimwegen E."/>
            <person name="Verardo R."/>
            <person name="Wei C.L."/>
            <person name="Yagi K."/>
            <person name="Yamanishi H."/>
            <person name="Zabarovsky E."/>
            <person name="Zhu S."/>
            <person name="Zimmer A."/>
            <person name="Hide W."/>
            <person name="Bult C."/>
            <person name="Grimmond S.M."/>
            <person name="Teasdale R.D."/>
            <person name="Liu E.T."/>
            <person name="Brusic V."/>
            <person name="Quackenbush J."/>
            <person name="Wahlestedt C."/>
            <person name="Mattick J.S."/>
            <person name="Hume D.A."/>
            <person name="Kai C."/>
            <person name="Sasaki D."/>
            <person name="Tomaru Y."/>
            <person name="Fukuda S."/>
            <person name="Kanamori-Katayama M."/>
            <person name="Suzuki M."/>
            <person name="Aoki J."/>
            <person name="Arakawa T."/>
            <person name="Iida J."/>
            <person name="Imamura K."/>
            <person name="Itoh M."/>
            <person name="Kato T."/>
            <person name="Kawaji H."/>
            <person name="Kawagashira N."/>
            <person name="Kawashima T."/>
            <person name="Kojima M."/>
            <person name="Kondo S."/>
            <person name="Konno H."/>
            <person name="Nakano K."/>
            <person name="Ninomiya N."/>
            <person name="Nishio T."/>
            <person name="Okada M."/>
            <person name="Plessy C."/>
            <person name="Shibata K."/>
            <person name="Shiraki T."/>
            <person name="Suzuki S."/>
            <person name="Tagami M."/>
            <person name="Waki K."/>
            <person name="Watahiki A."/>
            <person name="Okamura-Oho Y."/>
            <person name="Suzuki H."/>
            <person name="Kawai J."/>
            <person name="Hayashizaki Y."/>
        </authorList>
    </citation>
    <scope>NUCLEOTIDE SEQUENCE [LARGE SCALE MRNA]</scope>
    <source>
        <strain>C57BL/6J</strain>
    </source>
</reference>
<reference key="4">
    <citation type="journal article" date="2009" name="PLoS Biol.">
        <title>Lineage-specific biology revealed by a finished genome assembly of the mouse.</title>
        <authorList>
            <person name="Church D.M."/>
            <person name="Goodstadt L."/>
            <person name="Hillier L.W."/>
            <person name="Zody M.C."/>
            <person name="Goldstein S."/>
            <person name="She X."/>
            <person name="Bult C.J."/>
            <person name="Agarwala R."/>
            <person name="Cherry J.L."/>
            <person name="DiCuccio M."/>
            <person name="Hlavina W."/>
            <person name="Kapustin Y."/>
            <person name="Meric P."/>
            <person name="Maglott D."/>
            <person name="Birtle Z."/>
            <person name="Marques A.C."/>
            <person name="Graves T."/>
            <person name="Zhou S."/>
            <person name="Teague B."/>
            <person name="Potamousis K."/>
            <person name="Churas C."/>
            <person name="Place M."/>
            <person name="Herschleb J."/>
            <person name="Runnheim R."/>
            <person name="Forrest D."/>
            <person name="Amos-Landgraf J."/>
            <person name="Schwartz D.C."/>
            <person name="Cheng Z."/>
            <person name="Lindblad-Toh K."/>
            <person name="Eichler E.E."/>
            <person name="Ponting C.P."/>
        </authorList>
    </citation>
    <scope>NUCLEOTIDE SEQUENCE [LARGE SCALE GENOMIC DNA]</scope>
    <source>
        <strain>C57BL/6J</strain>
    </source>
</reference>
<reference key="5">
    <citation type="submission" date="2005-07" db="EMBL/GenBank/DDBJ databases">
        <authorList>
            <person name="Mural R.J."/>
            <person name="Adams M.D."/>
            <person name="Myers E.W."/>
            <person name="Smith H.O."/>
            <person name="Venter J.C."/>
        </authorList>
    </citation>
    <scope>NUCLEOTIDE SEQUENCE [LARGE SCALE GENOMIC DNA]</scope>
</reference>
<reference key="6">
    <citation type="journal article" date="2004" name="Genome Res.">
        <title>The status, quality, and expansion of the NIH full-length cDNA project: the Mammalian Gene Collection (MGC).</title>
        <authorList>
            <consortium name="The MGC Project Team"/>
        </authorList>
    </citation>
    <scope>NUCLEOTIDE SEQUENCE [LARGE SCALE MRNA]</scope>
    <source>
        <tissue>Trophoblast stem cell</tissue>
    </source>
</reference>
<reference key="7">
    <citation type="journal article" date="2006" name="Oncogene">
        <title>Function and biological roles of the Dickkopf family of Wnt modulators.</title>
        <authorList>
            <person name="Niehrs C."/>
        </authorList>
    </citation>
    <scope>REVIEW OF THE DKK FAMILY</scope>
</reference>
<reference key="8">
    <citation type="journal article" date="2008" name="J. Biol. Chem.">
        <title>Structural insight into the mechanisms of Wnt signaling antagonism by Dkk.</title>
        <authorList>
            <person name="Chen L."/>
            <person name="Wang K."/>
            <person name="Shao Y."/>
            <person name="Huang J."/>
            <person name="Li X."/>
            <person name="Shan J."/>
            <person name="Wu D."/>
            <person name="Zheng J.J."/>
        </authorList>
    </citation>
    <scope>FUNCTION</scope>
    <scope>SUBUNIT</scope>
    <scope>INTERACTION WITH LRP5 AND LRP6</scope>
    <scope>MUTAGENESIS OF HIS-210; LYS-217; ARG-242 AND HIS-267</scope>
</reference>
<reference key="9">
    <citation type="journal article" date="2008" name="Mol. Cell. Biol.">
        <title>Targeted disruption of the Wnt regulator Kremen induces limb defects and high bone density.</title>
        <authorList>
            <person name="Ellwanger K."/>
            <person name="Saito H."/>
            <person name="Clement-Lacroix P."/>
            <person name="Maltry N."/>
            <person name="Niedermeyer J."/>
            <person name="Lee W.K."/>
            <person name="Baron R."/>
            <person name="Rawadi G."/>
            <person name="Westphal H."/>
            <person name="Niehrs C."/>
        </authorList>
    </citation>
    <scope>FUNCTION</scope>
    <scope>DEVELOPMENTAL STAGE</scope>
    <scope>DISRUPTION PHENOTYPE</scope>
</reference>
<reference key="10">
    <citation type="journal article" date="2016" name="Cell Death Differ.">
        <title>Kremen1 and Dickkopf1 control cell survival in a Wnt-independent manner.</title>
        <authorList>
            <person name="Causeret F."/>
            <person name="Sumia I."/>
            <person name="Pierani A."/>
        </authorList>
    </citation>
    <scope>FUNCTION</scope>
    <scope>DEVELOPMENTAL STAGE</scope>
</reference>
<reference key="11">
    <citation type="journal article" date="2016" name="Sci. Rep.">
        <title>Kremen1 regulates mechanosensory hair cell development in the mammalian cochlea and the zebrafish lateral line.</title>
        <authorList>
            <person name="Mulvaney J.F."/>
            <person name="Thompkins C."/>
            <person name="Noda T."/>
            <person name="Nishimura K."/>
            <person name="Sun W.W."/>
            <person name="Lin S.Y."/>
            <person name="Coffin A."/>
            <person name="Dabdoub A."/>
        </authorList>
    </citation>
    <scope>DEVELOPMENTAL STAGE</scope>
</reference>